<name>FIXX_RHILE</name>
<keyword id="KW-0249">Electron transport</keyword>
<keyword id="KW-0408">Iron</keyword>
<keyword id="KW-0411">Iron-sulfur</keyword>
<keyword id="KW-0479">Metal-binding</keyword>
<keyword id="KW-0535">Nitrogen fixation</keyword>
<keyword id="KW-0614">Plasmid</keyword>
<keyword id="KW-0813">Transport</keyword>
<proteinExistence type="predicted"/>
<dbReference type="EMBL" id="X05049">
    <property type="protein sequence ID" value="CAA28722.1"/>
    <property type="molecule type" value="Genomic_DNA"/>
</dbReference>
<dbReference type="PIR" id="B25878">
    <property type="entry name" value="JC1001"/>
</dbReference>
<dbReference type="SMR" id="P09823"/>
<dbReference type="GO" id="GO:0005506">
    <property type="term" value="F:iron ion binding"/>
    <property type="evidence" value="ECO:0007669"/>
    <property type="project" value="InterPro"/>
</dbReference>
<dbReference type="GO" id="GO:0051536">
    <property type="term" value="F:iron-sulfur cluster binding"/>
    <property type="evidence" value="ECO:0007669"/>
    <property type="project" value="UniProtKB-KW"/>
</dbReference>
<dbReference type="GO" id="GO:0009399">
    <property type="term" value="P:nitrogen fixation"/>
    <property type="evidence" value="ECO:0007669"/>
    <property type="project" value="UniProtKB-KW"/>
</dbReference>
<dbReference type="Gene3D" id="3.30.70.20">
    <property type="match status" value="1"/>
</dbReference>
<dbReference type="InterPro" id="IPR007859">
    <property type="entry name" value="ETF-QO/FixX_C"/>
</dbReference>
<dbReference type="InterPro" id="IPR012206">
    <property type="entry name" value="Fd_FixX"/>
</dbReference>
<dbReference type="PANTHER" id="PTHR43082">
    <property type="entry name" value="FERREDOXIN-LIKE"/>
    <property type="match status" value="1"/>
</dbReference>
<dbReference type="PANTHER" id="PTHR43082:SF3">
    <property type="entry name" value="FERREDOXIN-LIKE PROTEIN YDIT"/>
    <property type="match status" value="1"/>
</dbReference>
<dbReference type="Pfam" id="PF05187">
    <property type="entry name" value="Fer4_ETF_QO"/>
    <property type="match status" value="1"/>
</dbReference>
<dbReference type="PIRSF" id="PIRSF036548">
    <property type="entry name" value="Fdx_FixX"/>
    <property type="match status" value="1"/>
</dbReference>
<dbReference type="SUPFAM" id="SSF54862">
    <property type="entry name" value="4Fe-4S ferredoxins"/>
    <property type="match status" value="1"/>
</dbReference>
<organism>
    <name type="scientific">Rhizobium leguminosarum</name>
    <dbReference type="NCBI Taxonomy" id="384"/>
    <lineage>
        <taxon>Bacteria</taxon>
        <taxon>Pseudomonadati</taxon>
        <taxon>Pseudomonadota</taxon>
        <taxon>Alphaproteobacteria</taxon>
        <taxon>Hyphomicrobiales</taxon>
        <taxon>Rhizobiaceae</taxon>
        <taxon>Rhizobium/Agrobacterium group</taxon>
        <taxon>Rhizobium</taxon>
    </lineage>
</organism>
<sequence length="98" mass="10971">MKATTIERIEDKLYQNRYLVDTRRPHITVRPHRSPSPSLLALTQICPAKCYEVNEIGQVAIVSDGCLECGTCRVLAEASGDIKWNYPRGGFGVLFKFG</sequence>
<feature type="chain" id="PRO_0000159207" description="Ferredoxin-like protein">
    <location>
        <begin position="1"/>
        <end position="98"/>
    </location>
</feature>
<accession>P09823</accession>
<protein>
    <recommendedName>
        <fullName>Ferredoxin-like protein</fullName>
    </recommendedName>
</protein>
<reference key="1">
    <citation type="journal article" date="1987" name="Nucleic Acids Res.">
        <title>Organization and partial sequence of a DNA region of the Rhizobium leguminosarum symbiotic plasmid pRL6JI containing the genes fixABC, nifA, nifB and a novel open reading frame.</title>
        <authorList>
            <person name="Groenger P."/>
            <person name="Manian S.S."/>
            <person name="Reilaender H."/>
            <person name="O'Connell M."/>
            <person name="Priefer U.B."/>
            <person name="Puehler A."/>
        </authorList>
    </citation>
    <scope>NUCLEOTIDE SEQUENCE [GENOMIC DNA]</scope>
</reference>
<geneLocation type="plasmid">
    <name>sym pRL6JI</name>
</geneLocation>
<comment type="function">
    <text>Could be a 3Fe-4S cluster-containing protein.</text>
</comment>
<comment type="similarity">
    <text evidence="1">To ferredoxins from P.putida and C.tartarivorum, ferredoxin I from A.vinelandii, ferredoxin II from D.desulfuricans.</text>
</comment>
<evidence type="ECO:0000305" key="1"/>
<gene>
    <name type="primary">fixX</name>
</gene>